<organism>
    <name type="scientific">Lactobacillus johnsonii (strain CNCM I-12250 / La1 / NCC 533)</name>
    <dbReference type="NCBI Taxonomy" id="257314"/>
    <lineage>
        <taxon>Bacteria</taxon>
        <taxon>Bacillati</taxon>
        <taxon>Bacillota</taxon>
        <taxon>Bacilli</taxon>
        <taxon>Lactobacillales</taxon>
        <taxon>Lactobacillaceae</taxon>
        <taxon>Lactobacillus</taxon>
    </lineage>
</organism>
<gene>
    <name evidence="1" type="primary">recA</name>
    <name type="ordered locus">LJ_0839</name>
</gene>
<comment type="function">
    <text evidence="1">Can catalyze the hydrolysis of ATP in the presence of single-stranded DNA, the ATP-dependent uptake of single-stranded DNA by duplex DNA, and the ATP-dependent hybridization of homologous single-stranded DNAs. It interacts with LexA causing its activation and leading to its autocatalytic cleavage.</text>
</comment>
<comment type="subcellular location">
    <subcellularLocation>
        <location evidence="1">Cytoplasm</location>
    </subcellularLocation>
</comment>
<comment type="similarity">
    <text evidence="1">Belongs to the RecA family.</text>
</comment>
<accession>P62216</accession>
<evidence type="ECO:0000255" key="1">
    <source>
        <dbReference type="HAMAP-Rule" id="MF_00268"/>
    </source>
</evidence>
<evidence type="ECO:0000256" key="2">
    <source>
        <dbReference type="SAM" id="MobiDB-lite"/>
    </source>
</evidence>
<dbReference type="EMBL" id="AE017198">
    <property type="protein sequence ID" value="AAS08660.1"/>
    <property type="molecule type" value="Genomic_DNA"/>
</dbReference>
<dbReference type="RefSeq" id="WP_004897730.1">
    <property type="nucleotide sequence ID" value="NC_005362.1"/>
</dbReference>
<dbReference type="SMR" id="P62216"/>
<dbReference type="GeneID" id="83570766"/>
<dbReference type="KEGG" id="ljo:LJ_0839"/>
<dbReference type="eggNOG" id="COG0468">
    <property type="taxonomic scope" value="Bacteria"/>
</dbReference>
<dbReference type="HOGENOM" id="CLU_040469_3_2_9"/>
<dbReference type="Proteomes" id="UP000000581">
    <property type="component" value="Chromosome"/>
</dbReference>
<dbReference type="GO" id="GO:0005829">
    <property type="term" value="C:cytosol"/>
    <property type="evidence" value="ECO:0007669"/>
    <property type="project" value="TreeGrafter"/>
</dbReference>
<dbReference type="GO" id="GO:0005524">
    <property type="term" value="F:ATP binding"/>
    <property type="evidence" value="ECO:0007669"/>
    <property type="project" value="UniProtKB-UniRule"/>
</dbReference>
<dbReference type="GO" id="GO:0016887">
    <property type="term" value="F:ATP hydrolysis activity"/>
    <property type="evidence" value="ECO:0007669"/>
    <property type="project" value="InterPro"/>
</dbReference>
<dbReference type="GO" id="GO:0140664">
    <property type="term" value="F:ATP-dependent DNA damage sensor activity"/>
    <property type="evidence" value="ECO:0007669"/>
    <property type="project" value="InterPro"/>
</dbReference>
<dbReference type="GO" id="GO:0003684">
    <property type="term" value="F:damaged DNA binding"/>
    <property type="evidence" value="ECO:0007669"/>
    <property type="project" value="UniProtKB-UniRule"/>
</dbReference>
<dbReference type="GO" id="GO:0003697">
    <property type="term" value="F:single-stranded DNA binding"/>
    <property type="evidence" value="ECO:0007669"/>
    <property type="project" value="UniProtKB-UniRule"/>
</dbReference>
<dbReference type="GO" id="GO:0006310">
    <property type="term" value="P:DNA recombination"/>
    <property type="evidence" value="ECO:0007669"/>
    <property type="project" value="UniProtKB-UniRule"/>
</dbReference>
<dbReference type="GO" id="GO:0006281">
    <property type="term" value="P:DNA repair"/>
    <property type="evidence" value="ECO:0007669"/>
    <property type="project" value="UniProtKB-UniRule"/>
</dbReference>
<dbReference type="GO" id="GO:0009432">
    <property type="term" value="P:SOS response"/>
    <property type="evidence" value="ECO:0007669"/>
    <property type="project" value="UniProtKB-UniRule"/>
</dbReference>
<dbReference type="CDD" id="cd00983">
    <property type="entry name" value="RecA"/>
    <property type="match status" value="1"/>
</dbReference>
<dbReference type="FunFam" id="3.40.50.300:FF:000087">
    <property type="entry name" value="Recombinase RecA"/>
    <property type="match status" value="1"/>
</dbReference>
<dbReference type="Gene3D" id="3.40.50.300">
    <property type="entry name" value="P-loop containing nucleotide triphosphate hydrolases"/>
    <property type="match status" value="1"/>
</dbReference>
<dbReference type="HAMAP" id="MF_00268">
    <property type="entry name" value="RecA"/>
    <property type="match status" value="1"/>
</dbReference>
<dbReference type="InterPro" id="IPR003593">
    <property type="entry name" value="AAA+_ATPase"/>
</dbReference>
<dbReference type="InterPro" id="IPR013765">
    <property type="entry name" value="DNA_recomb/repair_RecA"/>
</dbReference>
<dbReference type="InterPro" id="IPR020584">
    <property type="entry name" value="DNA_recomb/repair_RecA_CS"/>
</dbReference>
<dbReference type="InterPro" id="IPR027417">
    <property type="entry name" value="P-loop_NTPase"/>
</dbReference>
<dbReference type="InterPro" id="IPR049261">
    <property type="entry name" value="RecA-like_C"/>
</dbReference>
<dbReference type="InterPro" id="IPR049428">
    <property type="entry name" value="RecA-like_N"/>
</dbReference>
<dbReference type="InterPro" id="IPR020588">
    <property type="entry name" value="RecA_ATP-bd"/>
</dbReference>
<dbReference type="InterPro" id="IPR023400">
    <property type="entry name" value="RecA_C_sf"/>
</dbReference>
<dbReference type="InterPro" id="IPR020587">
    <property type="entry name" value="RecA_monomer-monomer_interface"/>
</dbReference>
<dbReference type="NCBIfam" id="TIGR02012">
    <property type="entry name" value="tigrfam_recA"/>
    <property type="match status" value="1"/>
</dbReference>
<dbReference type="PANTHER" id="PTHR45900:SF1">
    <property type="entry name" value="MITOCHONDRIAL DNA REPAIR PROTEIN RECA HOMOLOG-RELATED"/>
    <property type="match status" value="1"/>
</dbReference>
<dbReference type="PANTHER" id="PTHR45900">
    <property type="entry name" value="RECA"/>
    <property type="match status" value="1"/>
</dbReference>
<dbReference type="Pfam" id="PF00154">
    <property type="entry name" value="RecA"/>
    <property type="match status" value="1"/>
</dbReference>
<dbReference type="Pfam" id="PF21096">
    <property type="entry name" value="RecA_C"/>
    <property type="match status" value="1"/>
</dbReference>
<dbReference type="PRINTS" id="PR00142">
    <property type="entry name" value="RECA"/>
</dbReference>
<dbReference type="SMART" id="SM00382">
    <property type="entry name" value="AAA"/>
    <property type="match status" value="1"/>
</dbReference>
<dbReference type="SUPFAM" id="SSF52540">
    <property type="entry name" value="P-loop containing nucleoside triphosphate hydrolases"/>
    <property type="match status" value="1"/>
</dbReference>
<dbReference type="SUPFAM" id="SSF54752">
    <property type="entry name" value="RecA protein, C-terminal domain"/>
    <property type="match status" value="1"/>
</dbReference>
<dbReference type="PROSITE" id="PS00321">
    <property type="entry name" value="RECA_1"/>
    <property type="match status" value="1"/>
</dbReference>
<dbReference type="PROSITE" id="PS50162">
    <property type="entry name" value="RECA_2"/>
    <property type="match status" value="1"/>
</dbReference>
<dbReference type="PROSITE" id="PS50163">
    <property type="entry name" value="RECA_3"/>
    <property type="match status" value="1"/>
</dbReference>
<keyword id="KW-0067">ATP-binding</keyword>
<keyword id="KW-0963">Cytoplasm</keyword>
<keyword id="KW-0227">DNA damage</keyword>
<keyword id="KW-0233">DNA recombination</keyword>
<keyword id="KW-0234">DNA repair</keyword>
<keyword id="KW-0238">DNA-binding</keyword>
<keyword id="KW-0547">Nucleotide-binding</keyword>
<keyword id="KW-0742">SOS response</keyword>
<name>RECA_LACJO</name>
<reference key="1">
    <citation type="journal article" date="2004" name="Proc. Natl. Acad. Sci. U.S.A.">
        <title>The genome sequence of the probiotic intestinal bacterium Lactobacillus johnsonii NCC 533.</title>
        <authorList>
            <person name="Pridmore R.D."/>
            <person name="Berger B."/>
            <person name="Desiere F."/>
            <person name="Vilanova D."/>
            <person name="Barretto C."/>
            <person name="Pittet A.-C."/>
            <person name="Zwahlen M.-C."/>
            <person name="Rouvet M."/>
            <person name="Altermann E."/>
            <person name="Barrangou R."/>
            <person name="Mollet B."/>
            <person name="Mercenier A."/>
            <person name="Klaenhammer T."/>
            <person name="Arigoni F."/>
            <person name="Schell M.A."/>
        </authorList>
    </citation>
    <scope>NUCLEOTIDE SEQUENCE [LARGE SCALE GENOMIC DNA]</scope>
    <source>
        <strain>CNCM I-1225 / La1 / NCC 533</strain>
    </source>
</reference>
<protein>
    <recommendedName>
        <fullName evidence="1">Protein RecA</fullName>
    </recommendedName>
    <alternativeName>
        <fullName evidence="1">Recombinase A</fullName>
    </alternativeName>
</protein>
<feature type="chain" id="PRO_0000122732" description="Protein RecA">
    <location>
        <begin position="1"/>
        <end position="360"/>
    </location>
</feature>
<feature type="region of interest" description="Disordered" evidence="2">
    <location>
        <begin position="330"/>
        <end position="360"/>
    </location>
</feature>
<feature type="binding site" evidence="1">
    <location>
        <begin position="66"/>
        <end position="73"/>
    </location>
    <ligand>
        <name>ATP</name>
        <dbReference type="ChEBI" id="CHEBI:30616"/>
    </ligand>
</feature>
<proteinExistence type="inferred from homology"/>
<sequence>MAKDDKKKALDIALKKIEKDFGKGAVMRMGEKVDTQISTIPSGSLALDAALGVGGYPRGRIIEVYGPESSGKTTVALHAVAEVQKRGGTAAYIDAENAMDPAYAEALGVDIDSLILSQPNTGEEGLQIADTLIASGAIDILVVDSVAALVPRAEIDGDMGDSHVGLQARLMSQALRKLSGNISKTKTIAVFINQIREKVGVMFGNPETTPGGRALKFYSTIRLEVRRAEQIKQGSDVIGNRVKLKVVKNKVAPPFKVAEVDIMYGKGISQTGELIDMAADKDIIKKAGSWYSYGDDRIGQGRENAKQYLEEHPDVYEEVKEKVREAYGIDAKAIEERENPEKVKQDKEVPVNKDASDEKK</sequence>